<reference key="1">
    <citation type="submission" date="2008-10" db="EMBL/GenBank/DDBJ databases">
        <title>Genome sequence of Bacillus cereus AH187.</title>
        <authorList>
            <person name="Dodson R.J."/>
            <person name="Durkin A.S."/>
            <person name="Rosovitz M.J."/>
            <person name="Rasko D.A."/>
            <person name="Kolsto A.B."/>
            <person name="Okstad O.A."/>
            <person name="Ravel J."/>
            <person name="Sutton G."/>
        </authorList>
    </citation>
    <scope>NUCLEOTIDE SEQUENCE [LARGE SCALE GENOMIC DNA]</scope>
    <source>
        <strain>AH187</strain>
    </source>
</reference>
<feature type="chain" id="PRO_1000143476" description="ATP synthase subunit beta">
    <location>
        <begin position="1"/>
        <end position="468"/>
    </location>
</feature>
<feature type="binding site" evidence="1">
    <location>
        <begin position="155"/>
        <end position="162"/>
    </location>
    <ligand>
        <name>ATP</name>
        <dbReference type="ChEBI" id="CHEBI:30616"/>
    </ligand>
</feature>
<protein>
    <recommendedName>
        <fullName evidence="1">ATP synthase subunit beta</fullName>
        <ecNumber evidence="1">7.1.2.2</ecNumber>
    </recommendedName>
    <alternativeName>
        <fullName evidence="1">ATP synthase F1 sector subunit beta</fullName>
    </alternativeName>
    <alternativeName>
        <fullName evidence="1">F-ATPase subunit beta</fullName>
    </alternativeName>
</protein>
<evidence type="ECO:0000255" key="1">
    <source>
        <dbReference type="HAMAP-Rule" id="MF_01347"/>
    </source>
</evidence>
<name>ATPB_BACC7</name>
<dbReference type="EC" id="7.1.2.2" evidence="1"/>
<dbReference type="EMBL" id="CP001177">
    <property type="protein sequence ID" value="ACJ77729.1"/>
    <property type="molecule type" value="Genomic_DNA"/>
</dbReference>
<dbReference type="SMR" id="B7HY64"/>
<dbReference type="KEGG" id="bcr:BCAH187_A5482"/>
<dbReference type="HOGENOM" id="CLU_022398_0_2_9"/>
<dbReference type="Proteomes" id="UP000002214">
    <property type="component" value="Chromosome"/>
</dbReference>
<dbReference type="GO" id="GO:0005886">
    <property type="term" value="C:plasma membrane"/>
    <property type="evidence" value="ECO:0007669"/>
    <property type="project" value="UniProtKB-SubCell"/>
</dbReference>
<dbReference type="GO" id="GO:0045259">
    <property type="term" value="C:proton-transporting ATP synthase complex"/>
    <property type="evidence" value="ECO:0007669"/>
    <property type="project" value="UniProtKB-KW"/>
</dbReference>
<dbReference type="GO" id="GO:0005524">
    <property type="term" value="F:ATP binding"/>
    <property type="evidence" value="ECO:0007669"/>
    <property type="project" value="UniProtKB-UniRule"/>
</dbReference>
<dbReference type="GO" id="GO:0016887">
    <property type="term" value="F:ATP hydrolysis activity"/>
    <property type="evidence" value="ECO:0007669"/>
    <property type="project" value="InterPro"/>
</dbReference>
<dbReference type="GO" id="GO:0046933">
    <property type="term" value="F:proton-transporting ATP synthase activity, rotational mechanism"/>
    <property type="evidence" value="ECO:0007669"/>
    <property type="project" value="UniProtKB-UniRule"/>
</dbReference>
<dbReference type="CDD" id="cd18110">
    <property type="entry name" value="ATP-synt_F1_beta_C"/>
    <property type="match status" value="1"/>
</dbReference>
<dbReference type="CDD" id="cd18115">
    <property type="entry name" value="ATP-synt_F1_beta_N"/>
    <property type="match status" value="1"/>
</dbReference>
<dbReference type="CDD" id="cd01133">
    <property type="entry name" value="F1-ATPase_beta_CD"/>
    <property type="match status" value="1"/>
</dbReference>
<dbReference type="FunFam" id="1.10.1140.10:FF:000001">
    <property type="entry name" value="ATP synthase subunit beta"/>
    <property type="match status" value="1"/>
</dbReference>
<dbReference type="FunFam" id="2.40.10.170:FF:000005">
    <property type="entry name" value="ATP synthase subunit beta"/>
    <property type="match status" value="1"/>
</dbReference>
<dbReference type="FunFam" id="3.40.50.300:FF:000004">
    <property type="entry name" value="ATP synthase subunit beta"/>
    <property type="match status" value="1"/>
</dbReference>
<dbReference type="Gene3D" id="2.40.10.170">
    <property type="match status" value="1"/>
</dbReference>
<dbReference type="Gene3D" id="1.10.1140.10">
    <property type="entry name" value="Bovine Mitochondrial F1-atpase, Atp Synthase Beta Chain, Chain D, domain 3"/>
    <property type="match status" value="1"/>
</dbReference>
<dbReference type="Gene3D" id="3.40.50.300">
    <property type="entry name" value="P-loop containing nucleotide triphosphate hydrolases"/>
    <property type="match status" value="1"/>
</dbReference>
<dbReference type="HAMAP" id="MF_01347">
    <property type="entry name" value="ATP_synth_beta_bact"/>
    <property type="match status" value="1"/>
</dbReference>
<dbReference type="InterPro" id="IPR003593">
    <property type="entry name" value="AAA+_ATPase"/>
</dbReference>
<dbReference type="InterPro" id="IPR055190">
    <property type="entry name" value="ATP-synt_VA_C"/>
</dbReference>
<dbReference type="InterPro" id="IPR005722">
    <property type="entry name" value="ATP_synth_F1_bsu"/>
</dbReference>
<dbReference type="InterPro" id="IPR020003">
    <property type="entry name" value="ATPase_a/bsu_AS"/>
</dbReference>
<dbReference type="InterPro" id="IPR050053">
    <property type="entry name" value="ATPase_alpha/beta_chains"/>
</dbReference>
<dbReference type="InterPro" id="IPR004100">
    <property type="entry name" value="ATPase_F1/V1/A1_a/bsu_N"/>
</dbReference>
<dbReference type="InterPro" id="IPR036121">
    <property type="entry name" value="ATPase_F1/V1/A1_a/bsu_N_sf"/>
</dbReference>
<dbReference type="InterPro" id="IPR000194">
    <property type="entry name" value="ATPase_F1/V1/A1_a/bsu_nucl-bd"/>
</dbReference>
<dbReference type="InterPro" id="IPR024034">
    <property type="entry name" value="ATPase_F1/V1_b/a_C"/>
</dbReference>
<dbReference type="InterPro" id="IPR027417">
    <property type="entry name" value="P-loop_NTPase"/>
</dbReference>
<dbReference type="NCBIfam" id="TIGR01039">
    <property type="entry name" value="atpD"/>
    <property type="match status" value="1"/>
</dbReference>
<dbReference type="PANTHER" id="PTHR15184">
    <property type="entry name" value="ATP SYNTHASE"/>
    <property type="match status" value="1"/>
</dbReference>
<dbReference type="PANTHER" id="PTHR15184:SF71">
    <property type="entry name" value="ATP SYNTHASE SUBUNIT BETA, MITOCHONDRIAL"/>
    <property type="match status" value="1"/>
</dbReference>
<dbReference type="Pfam" id="PF00006">
    <property type="entry name" value="ATP-synt_ab"/>
    <property type="match status" value="1"/>
</dbReference>
<dbReference type="Pfam" id="PF02874">
    <property type="entry name" value="ATP-synt_ab_N"/>
    <property type="match status" value="1"/>
</dbReference>
<dbReference type="Pfam" id="PF22919">
    <property type="entry name" value="ATP-synt_VA_C"/>
    <property type="match status" value="1"/>
</dbReference>
<dbReference type="SMART" id="SM00382">
    <property type="entry name" value="AAA"/>
    <property type="match status" value="1"/>
</dbReference>
<dbReference type="SUPFAM" id="SSF47917">
    <property type="entry name" value="C-terminal domain of alpha and beta subunits of F1 ATP synthase"/>
    <property type="match status" value="1"/>
</dbReference>
<dbReference type="SUPFAM" id="SSF50615">
    <property type="entry name" value="N-terminal domain of alpha and beta subunits of F1 ATP synthase"/>
    <property type="match status" value="1"/>
</dbReference>
<dbReference type="SUPFAM" id="SSF52540">
    <property type="entry name" value="P-loop containing nucleoside triphosphate hydrolases"/>
    <property type="match status" value="1"/>
</dbReference>
<dbReference type="PROSITE" id="PS00152">
    <property type="entry name" value="ATPASE_ALPHA_BETA"/>
    <property type="match status" value="1"/>
</dbReference>
<accession>B7HY64</accession>
<sequence length="468" mass="51147">MNKGRVTQIMGPVVDVKFDGGKLPEIYNALTVKQSNENGELNLTFEVALHLGDDTVRTVAMSSTDGLVRGTEVEDTGKAISVPVGDATLGRVFNVLGDAIDLDGEVPADVRRDPIHRQAPAFEELSTKVEILETGIKVVDLLAPYIKGGKIGLFGGAGVGKTVLIQELINNIAQEHGGISVFAGVGERTREGNDLYHEMSDSGVIKKTAMVFGQMNEPPGARQRVALTGLTMAEYFRDEQGQDVLLFIDNIFRFTQAGSEVSALLGRMPSAVGYQPTLATEMGQLQERITSTNKGSITSIQAVYVPADDYTDPAPATTFAHLDATTNLERRLTQMGIYPAVDPLASTSRALSPEIVGEEHYEVARQVQQTLQRYKELQDIIAILGMDELSEEDKLVVHRARRIQFFLSQNFHVAEQFTGQKGSYVPVKDTVRGFKEILEGKYDDLPEDAFRLVGGIEEVIENAKKMMA</sequence>
<proteinExistence type="inferred from homology"/>
<organism>
    <name type="scientific">Bacillus cereus (strain AH187)</name>
    <dbReference type="NCBI Taxonomy" id="405534"/>
    <lineage>
        <taxon>Bacteria</taxon>
        <taxon>Bacillati</taxon>
        <taxon>Bacillota</taxon>
        <taxon>Bacilli</taxon>
        <taxon>Bacillales</taxon>
        <taxon>Bacillaceae</taxon>
        <taxon>Bacillus</taxon>
        <taxon>Bacillus cereus group</taxon>
    </lineage>
</organism>
<comment type="function">
    <text evidence="1">Produces ATP from ADP in the presence of a proton gradient across the membrane. The catalytic sites are hosted primarily by the beta subunits.</text>
</comment>
<comment type="catalytic activity">
    <reaction evidence="1">
        <text>ATP + H2O + 4 H(+)(in) = ADP + phosphate + 5 H(+)(out)</text>
        <dbReference type="Rhea" id="RHEA:57720"/>
        <dbReference type="ChEBI" id="CHEBI:15377"/>
        <dbReference type="ChEBI" id="CHEBI:15378"/>
        <dbReference type="ChEBI" id="CHEBI:30616"/>
        <dbReference type="ChEBI" id="CHEBI:43474"/>
        <dbReference type="ChEBI" id="CHEBI:456216"/>
        <dbReference type="EC" id="7.1.2.2"/>
    </reaction>
</comment>
<comment type="subunit">
    <text evidence="1">F-type ATPases have 2 components, CF(1) - the catalytic core - and CF(0) - the membrane proton channel. CF(1) has five subunits: alpha(3), beta(3), gamma(1), delta(1), epsilon(1). CF(0) has three main subunits: a(1), b(2) and c(9-12). The alpha and beta chains form an alternating ring which encloses part of the gamma chain. CF(1) is attached to CF(0) by a central stalk formed by the gamma and epsilon chains, while a peripheral stalk is formed by the delta and b chains.</text>
</comment>
<comment type="subcellular location">
    <subcellularLocation>
        <location evidence="1">Cell membrane</location>
        <topology evidence="1">Peripheral membrane protein</topology>
    </subcellularLocation>
</comment>
<comment type="similarity">
    <text evidence="1">Belongs to the ATPase alpha/beta chains family.</text>
</comment>
<gene>
    <name evidence="1" type="primary">atpD</name>
    <name type="ordered locus">BCAH187_A5482</name>
</gene>
<keyword id="KW-0066">ATP synthesis</keyword>
<keyword id="KW-0067">ATP-binding</keyword>
<keyword id="KW-1003">Cell membrane</keyword>
<keyword id="KW-0139">CF(1)</keyword>
<keyword id="KW-0375">Hydrogen ion transport</keyword>
<keyword id="KW-0406">Ion transport</keyword>
<keyword id="KW-0472">Membrane</keyword>
<keyword id="KW-0547">Nucleotide-binding</keyword>
<keyword id="KW-1278">Translocase</keyword>
<keyword id="KW-0813">Transport</keyword>